<protein>
    <recommendedName>
        <fullName>Nitrogenase iron-molybdenum cofactor biosynthesis protein NifE</fullName>
    </recommendedName>
</protein>
<feature type="chain" id="PRO_0000153112" description="Nitrogenase iron-molybdenum cofactor biosynthesis protein NifE">
    <location>
        <begin position="1"/>
        <end position="474"/>
    </location>
</feature>
<feature type="sequence conflict" description="In Ref. 2; AAA22153." evidence="1" ref="2">
    <location>
        <begin position="133"/>
        <end position="150"/>
    </location>
</feature>
<feature type="sequence conflict" description="In Ref. 2; AAA22153." evidence="1" ref="2">
    <original>R</original>
    <variation>G</variation>
    <location>
        <position position="233"/>
    </location>
</feature>
<feature type="sequence conflict" description="In Ref. 2; AAA22153." evidence="1" ref="2">
    <original>NV</original>
    <variation>KR</variation>
    <location>
        <begin position="256"/>
        <end position="257"/>
    </location>
</feature>
<feature type="sequence conflict" description="In Ref. 1; AAA64716." evidence="1" ref="1">
    <original>R</original>
    <variation>A</variation>
    <location>
        <position position="465"/>
    </location>
</feature>
<dbReference type="EMBL" id="M20568">
    <property type="protein sequence ID" value="AAA64716.1"/>
    <property type="molecule type" value="Genomic_DNA"/>
</dbReference>
<dbReference type="EMBL" id="X07293">
    <property type="protein sequence ID" value="CAA30271.1"/>
    <property type="molecule type" value="Genomic_DNA"/>
</dbReference>
<dbReference type="EMBL" id="M11745">
    <property type="protein sequence ID" value="AAA22153.1"/>
    <property type="molecule type" value="Genomic_DNA"/>
</dbReference>
<dbReference type="EMBL" id="M15815">
    <property type="protein sequence ID" value="AAA22157.1"/>
    <property type="molecule type" value="Genomic_DNA"/>
</dbReference>
<dbReference type="PIR" id="S00880">
    <property type="entry name" value="S00880"/>
</dbReference>
<dbReference type="SMR" id="P08293"/>
<dbReference type="DIP" id="DIP-59675N"/>
<dbReference type="IntAct" id="P08293">
    <property type="interactions" value="1"/>
</dbReference>
<dbReference type="BioCyc" id="MetaCyc:MONOMER-19486"/>
<dbReference type="UniPathway" id="UPA00782"/>
<dbReference type="GO" id="GO:0016163">
    <property type="term" value="F:nitrogenase activity"/>
    <property type="evidence" value="ECO:0007669"/>
    <property type="project" value="InterPro"/>
</dbReference>
<dbReference type="GO" id="GO:0032324">
    <property type="term" value="P:molybdopterin cofactor biosynthetic process"/>
    <property type="evidence" value="ECO:0000315"/>
    <property type="project" value="CACAO"/>
</dbReference>
<dbReference type="GO" id="GO:0009399">
    <property type="term" value="P:nitrogen fixation"/>
    <property type="evidence" value="ECO:0007669"/>
    <property type="project" value="UniProtKB-KW"/>
</dbReference>
<dbReference type="GO" id="GO:0065003">
    <property type="term" value="P:protein-containing complex assembly"/>
    <property type="evidence" value="ECO:0007669"/>
    <property type="project" value="InterPro"/>
</dbReference>
<dbReference type="FunFam" id="3.40.50.12380:FF:000001">
    <property type="entry name" value="Nitrogenase MoFe cofactor biosynthesis protein NifE"/>
    <property type="match status" value="1"/>
</dbReference>
<dbReference type="FunFam" id="3.40.50.1980:FF:000033">
    <property type="entry name" value="Nitrogenase MoFe cofactor biosynthesis protein NifE"/>
    <property type="match status" value="1"/>
</dbReference>
<dbReference type="Gene3D" id="3.40.50.12380">
    <property type="entry name" value="Nitrogenase MoFe cofactor biosynthesis protein NifE, C-terminal"/>
    <property type="match status" value="1"/>
</dbReference>
<dbReference type="Gene3D" id="3.40.50.1980">
    <property type="entry name" value="Nitrogenase molybdenum iron protein domain"/>
    <property type="match status" value="1"/>
</dbReference>
<dbReference type="InterPro" id="IPR000510">
    <property type="entry name" value="Nase/OxRdtase_comp1"/>
</dbReference>
<dbReference type="InterPro" id="IPR000318">
    <property type="entry name" value="Nase_comp1_CS"/>
</dbReference>
<dbReference type="InterPro" id="IPR005973">
    <property type="entry name" value="NifE"/>
</dbReference>
<dbReference type="InterPro" id="IPR049939">
    <property type="entry name" value="NifE-like"/>
</dbReference>
<dbReference type="NCBIfam" id="TIGR01283">
    <property type="entry name" value="nifE"/>
    <property type="match status" value="1"/>
</dbReference>
<dbReference type="PANTHER" id="PTHR42956">
    <property type="entry name" value="NITROGENASE IRON-MOLYBDENUM COFACTOR BIOSYNTHESIS PROTEIN NIFE"/>
    <property type="match status" value="1"/>
</dbReference>
<dbReference type="PANTHER" id="PTHR42956:SF1">
    <property type="entry name" value="NITROGENASE IRON-MOLYBDENUM COFACTOR BIOSYNTHESIS PROTEIN NIFE"/>
    <property type="match status" value="1"/>
</dbReference>
<dbReference type="Pfam" id="PF00148">
    <property type="entry name" value="Oxidored_nitro"/>
    <property type="match status" value="1"/>
</dbReference>
<dbReference type="SUPFAM" id="SSF53807">
    <property type="entry name" value="Helical backbone' metal receptor"/>
    <property type="match status" value="1"/>
</dbReference>
<dbReference type="PROSITE" id="PS00699">
    <property type="entry name" value="NITROGENASE_1_1"/>
    <property type="match status" value="1"/>
</dbReference>
<dbReference type="PROSITE" id="PS00090">
    <property type="entry name" value="NITROGENASE_1_2"/>
    <property type="match status" value="1"/>
</dbReference>
<accession>P08293</accession>
<gene>
    <name type="primary">nifE</name>
</gene>
<organism>
    <name type="scientific">Azotobacter vinelandii</name>
    <dbReference type="NCBI Taxonomy" id="354"/>
    <lineage>
        <taxon>Bacteria</taxon>
        <taxon>Pseudomonadati</taxon>
        <taxon>Pseudomonadota</taxon>
        <taxon>Gammaproteobacteria</taxon>
        <taxon>Pseudomonadales</taxon>
        <taxon>Pseudomonadaceae</taxon>
        <taxon>Azotobacter</taxon>
    </lineage>
</organism>
<name>NIFE_AZOVI</name>
<sequence length="474" mass="52163">MKAKDIAELLDEPACSHNKKEKSGCAKPKPGATDGRCSFDGAQIALLPVADVAHIVHGPIACAGSSWDNRGTRSSGPDLYRIGMTTDLTENDVIMGRAEKRLFHAIRQAVESYLPPAVFVYNTCVPALIGDDVDAVCKAAAERFGTPVIPVDSAGFYGTKNLGNRIAGEAMLKYVIGTREPDPLPVGSERPGIRVHDVNLIGEYNIAGEFWHVLPLLDELGLRVLCTLAGDARYREVQTMHRAEVNMMVCSKAMLNVARKLQETYGTPWFEGSFYGITDTSQALRDFARLLDDPDLTARTEALIAREEAKVRAALEPWRARLEGKRVLLYTGGVKSWSVVSPLQDLGMKVVATGTKKSTEEDKARIRELMGDDVKMLDEGNARVLLKTVDEYQADILIAGGRNMYTALKGRVPFLDINQEREFGYGGYDRMLELVRHVCITLECPVWEAVRRPAPWDIPASQDARPSGGPFGER</sequence>
<proteinExistence type="inferred from homology"/>
<reference key="1">
    <citation type="journal article" date="1989" name="J. Bacteriol.">
        <title>Physical and genetic map of the major nif gene cluster from Azotobacter vinelandii.</title>
        <authorList>
            <person name="Jacobson M.R."/>
            <person name="Brigle K.E."/>
            <person name="Bennett L.T."/>
            <person name="Setterquist R.A."/>
            <person name="Wilson M.S."/>
            <person name="Cash V.L."/>
            <person name="Beynon J."/>
            <person name="Newton W.E."/>
            <person name="Dean D.R."/>
        </authorList>
    </citation>
    <scope>NUCLEOTIDE SEQUENCE [GENOMIC DNA]</scope>
    <source>
        <strain>ATCC 13705 / OP1 / DSM 366 / NCIMB 11614 / LMG 3878 / UW</strain>
    </source>
</reference>
<reference key="2">
    <citation type="journal article" date="1985" name="Proc. Natl. Acad. Sci. U.S.A.">
        <title>Azotobacter vinelandii nifD- and nifE-encoded polypeptides share structural homology.</title>
        <authorList>
            <person name="Dean D.R."/>
            <person name="Brigle K.E."/>
        </authorList>
    </citation>
    <scope>NUCLEOTIDE SEQUENCE [GENOMIC DNA]</scope>
</reference>
<reference key="3">
    <citation type="journal article" date="1988" name="Nucleic Acids Res.">
        <title>Revised nucleotide sequence of the Azotobacter vinelandii nifE gene.</title>
        <authorList>
            <person name="Brigle K.E."/>
            <person name="Dean D.R."/>
        </authorList>
    </citation>
    <scope>NUCLEOTIDE SEQUENCE [GENOMIC DNA]</scope>
    <scope>SEQUENCE REVISION</scope>
</reference>
<reference key="4">
    <citation type="journal article" date="1987" name="J. Bacteriol.">
        <title>Products of the iron-molybdenum cofactor-specific biosynthetic genes, nifE and nifN, are structurally homologous to the products of the nitrogenase molybdenum-iron protein genes, nifD and nifK.</title>
        <authorList>
            <person name="Brigle K.E."/>
            <person name="Weiss M.C."/>
            <person name="Newton W.E."/>
            <person name="Dean D.R."/>
        </authorList>
    </citation>
    <scope>NUCLEOTIDE SEQUENCE [GENOMIC DNA] OF 422-473</scope>
</reference>
<evidence type="ECO:0000305" key="1"/>
<comment type="function">
    <text>This protein may play a role in the biosynthesis of the prosthetic group of nitrogenase (FeMo cofactor).</text>
</comment>
<comment type="pathway">
    <text>Cofactor biosynthesis; Fe-Mo cofactor biosynthesis.</text>
</comment>
<comment type="similarity">
    <text evidence="1">Belongs to the NifD/NifK/NifE/NifN family.</text>
</comment>
<keyword id="KW-0535">Nitrogen fixation</keyword>